<proteinExistence type="inferred from homology"/>
<reference key="1">
    <citation type="journal article" date="2009" name="PLoS Genet.">
        <title>Organised genome dynamics in the Escherichia coli species results in highly diverse adaptive paths.</title>
        <authorList>
            <person name="Touchon M."/>
            <person name="Hoede C."/>
            <person name="Tenaillon O."/>
            <person name="Barbe V."/>
            <person name="Baeriswyl S."/>
            <person name="Bidet P."/>
            <person name="Bingen E."/>
            <person name="Bonacorsi S."/>
            <person name="Bouchier C."/>
            <person name="Bouvet O."/>
            <person name="Calteau A."/>
            <person name="Chiapello H."/>
            <person name="Clermont O."/>
            <person name="Cruveiller S."/>
            <person name="Danchin A."/>
            <person name="Diard M."/>
            <person name="Dossat C."/>
            <person name="Karoui M.E."/>
            <person name="Frapy E."/>
            <person name="Garry L."/>
            <person name="Ghigo J.M."/>
            <person name="Gilles A.M."/>
            <person name="Johnson J."/>
            <person name="Le Bouguenec C."/>
            <person name="Lescat M."/>
            <person name="Mangenot S."/>
            <person name="Martinez-Jehanne V."/>
            <person name="Matic I."/>
            <person name="Nassif X."/>
            <person name="Oztas S."/>
            <person name="Petit M.A."/>
            <person name="Pichon C."/>
            <person name="Rouy Z."/>
            <person name="Ruf C.S."/>
            <person name="Schneider D."/>
            <person name="Tourret J."/>
            <person name="Vacherie B."/>
            <person name="Vallenet D."/>
            <person name="Medigue C."/>
            <person name="Rocha E.P.C."/>
            <person name="Denamur E."/>
        </authorList>
    </citation>
    <scope>NUCLEOTIDE SEQUENCE [LARGE SCALE GENOMIC DNA]</scope>
    <source>
        <strain>UMN026 / ExPEC</strain>
    </source>
</reference>
<organism>
    <name type="scientific">Escherichia coli O17:K52:H18 (strain UMN026 / ExPEC)</name>
    <dbReference type="NCBI Taxonomy" id="585056"/>
    <lineage>
        <taxon>Bacteria</taxon>
        <taxon>Pseudomonadati</taxon>
        <taxon>Pseudomonadota</taxon>
        <taxon>Gammaproteobacteria</taxon>
        <taxon>Enterobacterales</taxon>
        <taxon>Enterobacteriaceae</taxon>
        <taxon>Escherichia</taxon>
    </lineage>
</organism>
<protein>
    <recommendedName>
        <fullName evidence="1">CinA-like protein</fullName>
    </recommendedName>
</protein>
<sequence length="402" mass="44444">MLKVEMLSTGDEVLHGQIVDTNAAWLADFFFHQGLPLSRRNTVGDNLDDLVTILRERSQHADVLIVNGGLGPTSDDLSALAAATAKGEGLVLHEAWLKEMERYFHERGRVMTPSNRKQAELPASAEFINNPVGTACGFAVQLNRCLMFFTPGVPSEFKVMVEHEILPRLRERFSLPQPPVCLRLTTFGRSESDLAQSLDTLQLPPGVTMGYRSSMPIIELKLTGPASEKQAMEKLWLDVKRVAGQSVIFEGTEGLPSQISRELQNRQFSLTLSEQFTGGLLALQLSRAGAPLLACEVVPSQEETLAQTAHWITERRANHFAGLALAVSGFENEHLNFALATPDGTFALRVRFSTTRYSLAIRQEVCAMMALNMLRRWLNGQDIASEHGWIEVVESMTLSSAL</sequence>
<accession>B7N5L4</accession>
<feature type="chain" id="PRO_1000118920" description="CinA-like protein">
    <location>
        <begin position="1"/>
        <end position="402"/>
    </location>
</feature>
<comment type="similarity">
    <text evidence="1">Belongs to the CinA family.</text>
</comment>
<name>CINAL_ECOLU</name>
<evidence type="ECO:0000255" key="1">
    <source>
        <dbReference type="HAMAP-Rule" id="MF_00226"/>
    </source>
</evidence>
<gene>
    <name type="ordered locus">ECUMN_2590</name>
</gene>
<dbReference type="EMBL" id="CU928163">
    <property type="protein sequence ID" value="CAR13773.1"/>
    <property type="molecule type" value="Genomic_DNA"/>
</dbReference>
<dbReference type="RefSeq" id="WP_000921638.1">
    <property type="nucleotide sequence ID" value="NC_011751.1"/>
</dbReference>
<dbReference type="RefSeq" id="YP_002413301.1">
    <property type="nucleotide sequence ID" value="NC_011751.1"/>
</dbReference>
<dbReference type="SMR" id="B7N5L4"/>
<dbReference type="STRING" id="585056.ECUMN_2590"/>
<dbReference type="KEGG" id="eum:ECUMN_2590"/>
<dbReference type="PATRIC" id="fig|585056.7.peg.2770"/>
<dbReference type="HOGENOM" id="CLU_030805_9_1_6"/>
<dbReference type="Proteomes" id="UP000007097">
    <property type="component" value="Chromosome"/>
</dbReference>
<dbReference type="CDD" id="cd00885">
    <property type="entry name" value="cinA"/>
    <property type="match status" value="1"/>
</dbReference>
<dbReference type="Gene3D" id="3.40.980.10">
    <property type="entry name" value="MoaB/Mog-like domain"/>
    <property type="match status" value="1"/>
</dbReference>
<dbReference type="HAMAP" id="MF_00226_B">
    <property type="entry name" value="CinA_B"/>
    <property type="match status" value="1"/>
</dbReference>
<dbReference type="InterPro" id="IPR050101">
    <property type="entry name" value="CinA"/>
</dbReference>
<dbReference type="InterPro" id="IPR036653">
    <property type="entry name" value="CinA-like_C"/>
</dbReference>
<dbReference type="InterPro" id="IPR008135">
    <property type="entry name" value="Competence-induced_CinA"/>
</dbReference>
<dbReference type="InterPro" id="IPR036425">
    <property type="entry name" value="MoaB/Mog-like_dom_sf"/>
</dbReference>
<dbReference type="InterPro" id="IPR001453">
    <property type="entry name" value="MoaB/Mog_dom"/>
</dbReference>
<dbReference type="NCBIfam" id="TIGR00200">
    <property type="entry name" value="cinA_nterm"/>
    <property type="match status" value="1"/>
</dbReference>
<dbReference type="NCBIfam" id="TIGR00177">
    <property type="entry name" value="molyb_syn"/>
    <property type="match status" value="1"/>
</dbReference>
<dbReference type="NCBIfam" id="NF002978">
    <property type="entry name" value="PRK03673.1"/>
    <property type="match status" value="1"/>
</dbReference>
<dbReference type="PANTHER" id="PTHR13939">
    <property type="entry name" value="NICOTINAMIDE-NUCLEOTIDE AMIDOHYDROLASE PNCC"/>
    <property type="match status" value="1"/>
</dbReference>
<dbReference type="PANTHER" id="PTHR13939:SF0">
    <property type="entry name" value="NMN AMIDOHYDROLASE-LIKE PROTEIN YFAY"/>
    <property type="match status" value="1"/>
</dbReference>
<dbReference type="Pfam" id="PF00994">
    <property type="entry name" value="MoCF_biosynth"/>
    <property type="match status" value="1"/>
</dbReference>
<dbReference type="PIRSF" id="PIRSF006728">
    <property type="entry name" value="CinA"/>
    <property type="match status" value="1"/>
</dbReference>
<dbReference type="SMART" id="SM00852">
    <property type="entry name" value="MoCF_biosynth"/>
    <property type="match status" value="1"/>
</dbReference>
<dbReference type="SUPFAM" id="SSF142433">
    <property type="entry name" value="CinA-like"/>
    <property type="match status" value="1"/>
</dbReference>
<dbReference type="SUPFAM" id="SSF53218">
    <property type="entry name" value="Molybdenum cofactor biosynthesis proteins"/>
    <property type="match status" value="1"/>
</dbReference>